<feature type="chain" id="PRO_0000254673" description="Cytochrome b">
    <location>
        <begin position="1"/>
        <end position="379"/>
    </location>
</feature>
<feature type="transmembrane region" description="Helical" evidence="2">
    <location>
        <begin position="33"/>
        <end position="53"/>
    </location>
</feature>
<feature type="transmembrane region" description="Helical" evidence="2">
    <location>
        <begin position="77"/>
        <end position="98"/>
    </location>
</feature>
<feature type="transmembrane region" description="Helical" evidence="2">
    <location>
        <begin position="113"/>
        <end position="133"/>
    </location>
</feature>
<feature type="transmembrane region" description="Helical" evidence="2">
    <location>
        <begin position="178"/>
        <end position="198"/>
    </location>
</feature>
<feature type="transmembrane region" description="Helical" evidence="2">
    <location>
        <begin position="226"/>
        <end position="246"/>
    </location>
</feature>
<feature type="transmembrane region" description="Helical" evidence="2">
    <location>
        <begin position="288"/>
        <end position="308"/>
    </location>
</feature>
<feature type="transmembrane region" description="Helical" evidence="2">
    <location>
        <begin position="320"/>
        <end position="340"/>
    </location>
</feature>
<feature type="transmembrane region" description="Helical" evidence="2">
    <location>
        <begin position="347"/>
        <end position="367"/>
    </location>
</feature>
<feature type="binding site" description="axial binding residue" evidence="2">
    <location>
        <position position="83"/>
    </location>
    <ligand>
        <name>heme b</name>
        <dbReference type="ChEBI" id="CHEBI:60344"/>
        <label>b562</label>
    </ligand>
    <ligandPart>
        <name>Fe</name>
        <dbReference type="ChEBI" id="CHEBI:18248"/>
    </ligandPart>
</feature>
<feature type="binding site" description="axial binding residue" evidence="2">
    <location>
        <position position="97"/>
    </location>
    <ligand>
        <name>heme b</name>
        <dbReference type="ChEBI" id="CHEBI:60344"/>
        <label>b566</label>
    </ligand>
    <ligandPart>
        <name>Fe</name>
        <dbReference type="ChEBI" id="CHEBI:18248"/>
    </ligandPart>
</feature>
<feature type="binding site" description="axial binding residue" evidence="2">
    <location>
        <position position="182"/>
    </location>
    <ligand>
        <name>heme b</name>
        <dbReference type="ChEBI" id="CHEBI:60344"/>
        <label>b562</label>
    </ligand>
    <ligandPart>
        <name>Fe</name>
        <dbReference type="ChEBI" id="CHEBI:18248"/>
    </ligandPart>
</feature>
<feature type="binding site" description="axial binding residue" evidence="2">
    <location>
        <position position="196"/>
    </location>
    <ligand>
        <name>heme b</name>
        <dbReference type="ChEBI" id="CHEBI:60344"/>
        <label>b566</label>
    </ligand>
    <ligandPart>
        <name>Fe</name>
        <dbReference type="ChEBI" id="CHEBI:18248"/>
    </ligandPart>
</feature>
<feature type="binding site" evidence="2">
    <location>
        <position position="201"/>
    </location>
    <ligand>
        <name>a ubiquinone</name>
        <dbReference type="ChEBI" id="CHEBI:16389"/>
    </ligand>
</feature>
<organism>
    <name type="scientific">Cephalophorus rufilatus</name>
    <name type="common">Red-flanked duiker</name>
    <name type="synonym">Cephalophus rufilatus</name>
    <dbReference type="NCBI Taxonomy" id="129230"/>
    <lineage>
        <taxon>Eukaryota</taxon>
        <taxon>Metazoa</taxon>
        <taxon>Chordata</taxon>
        <taxon>Craniata</taxon>
        <taxon>Vertebrata</taxon>
        <taxon>Euteleostomi</taxon>
        <taxon>Mammalia</taxon>
        <taxon>Eutheria</taxon>
        <taxon>Laurasiatheria</taxon>
        <taxon>Artiodactyla</taxon>
        <taxon>Ruminantia</taxon>
        <taxon>Pecora</taxon>
        <taxon>Bovidae</taxon>
        <taxon>Cephalophinae</taxon>
        <taxon>Cephalophorus</taxon>
    </lineage>
</organism>
<proteinExistence type="inferred from homology"/>
<comment type="function">
    <text evidence="2">Component of the ubiquinol-cytochrome c reductase complex (complex III or cytochrome b-c1 complex) that is part of the mitochondrial respiratory chain. The b-c1 complex mediates electron transfer from ubiquinol to cytochrome c. Contributes to the generation of a proton gradient across the mitochondrial membrane that is then used for ATP synthesis.</text>
</comment>
<comment type="cofactor">
    <cofactor evidence="2">
        <name>heme b</name>
        <dbReference type="ChEBI" id="CHEBI:60344"/>
    </cofactor>
    <text evidence="2">Binds 2 heme b groups non-covalently.</text>
</comment>
<comment type="subunit">
    <text evidence="2">The cytochrome bc1 complex contains 11 subunits: 3 respiratory subunits (MT-CYB, CYC1 and UQCRFS1), 2 core proteins (UQCRC1 and UQCRC2) and 6 low-molecular weight proteins (UQCRH/QCR6, UQCRB/QCR7, UQCRQ/QCR8, UQCR10/QCR9, UQCR11/QCR10 and a cleavage product of UQCRFS1). This cytochrome bc1 complex then forms a dimer.</text>
</comment>
<comment type="subcellular location">
    <subcellularLocation>
        <location evidence="2">Mitochondrion inner membrane</location>
        <topology evidence="2">Multi-pass membrane protein</topology>
    </subcellularLocation>
</comment>
<comment type="miscellaneous">
    <text evidence="1">Heme 1 (or BL or b562) is low-potential and absorbs at about 562 nm, and heme 2 (or BH or b566) is high-potential and absorbs at about 566 nm.</text>
</comment>
<comment type="similarity">
    <text evidence="3 4">Belongs to the cytochrome b family.</text>
</comment>
<comment type="caution">
    <text evidence="2">The full-length protein contains only eight transmembrane helices, not nine as predicted by bioinformatics tools.</text>
</comment>
<dbReference type="EMBL" id="AF153901">
    <property type="protein sequence ID" value="AAK26689.1"/>
    <property type="molecule type" value="Genomic_DNA"/>
</dbReference>
<dbReference type="SMR" id="Q9B5Q5"/>
<dbReference type="GO" id="GO:0005743">
    <property type="term" value="C:mitochondrial inner membrane"/>
    <property type="evidence" value="ECO:0007669"/>
    <property type="project" value="UniProtKB-SubCell"/>
</dbReference>
<dbReference type="GO" id="GO:0045275">
    <property type="term" value="C:respiratory chain complex III"/>
    <property type="evidence" value="ECO:0007669"/>
    <property type="project" value="InterPro"/>
</dbReference>
<dbReference type="GO" id="GO:0046872">
    <property type="term" value="F:metal ion binding"/>
    <property type="evidence" value="ECO:0007669"/>
    <property type="project" value="UniProtKB-KW"/>
</dbReference>
<dbReference type="GO" id="GO:0008121">
    <property type="term" value="F:ubiquinol-cytochrome-c reductase activity"/>
    <property type="evidence" value="ECO:0007669"/>
    <property type="project" value="InterPro"/>
</dbReference>
<dbReference type="GO" id="GO:0006122">
    <property type="term" value="P:mitochondrial electron transport, ubiquinol to cytochrome c"/>
    <property type="evidence" value="ECO:0007669"/>
    <property type="project" value="TreeGrafter"/>
</dbReference>
<dbReference type="CDD" id="cd00290">
    <property type="entry name" value="cytochrome_b_C"/>
    <property type="match status" value="1"/>
</dbReference>
<dbReference type="CDD" id="cd00284">
    <property type="entry name" value="Cytochrome_b_N"/>
    <property type="match status" value="1"/>
</dbReference>
<dbReference type="FunFam" id="1.20.810.10:FF:000002">
    <property type="entry name" value="Cytochrome b"/>
    <property type="match status" value="1"/>
</dbReference>
<dbReference type="Gene3D" id="1.20.810.10">
    <property type="entry name" value="Cytochrome Bc1 Complex, Chain C"/>
    <property type="match status" value="1"/>
</dbReference>
<dbReference type="InterPro" id="IPR005798">
    <property type="entry name" value="Cyt_b/b6_C"/>
</dbReference>
<dbReference type="InterPro" id="IPR036150">
    <property type="entry name" value="Cyt_b/b6_C_sf"/>
</dbReference>
<dbReference type="InterPro" id="IPR005797">
    <property type="entry name" value="Cyt_b/b6_N"/>
</dbReference>
<dbReference type="InterPro" id="IPR027387">
    <property type="entry name" value="Cytb/b6-like_sf"/>
</dbReference>
<dbReference type="InterPro" id="IPR030689">
    <property type="entry name" value="Cytochrome_b"/>
</dbReference>
<dbReference type="InterPro" id="IPR048260">
    <property type="entry name" value="Cytochrome_b_C_euk/bac"/>
</dbReference>
<dbReference type="InterPro" id="IPR048259">
    <property type="entry name" value="Cytochrome_b_N_euk/bac"/>
</dbReference>
<dbReference type="InterPro" id="IPR016174">
    <property type="entry name" value="Di-haem_cyt_TM"/>
</dbReference>
<dbReference type="PANTHER" id="PTHR19271">
    <property type="entry name" value="CYTOCHROME B"/>
    <property type="match status" value="1"/>
</dbReference>
<dbReference type="PANTHER" id="PTHR19271:SF16">
    <property type="entry name" value="CYTOCHROME B"/>
    <property type="match status" value="1"/>
</dbReference>
<dbReference type="Pfam" id="PF00032">
    <property type="entry name" value="Cytochrom_B_C"/>
    <property type="match status" value="1"/>
</dbReference>
<dbReference type="Pfam" id="PF00033">
    <property type="entry name" value="Cytochrome_B"/>
    <property type="match status" value="1"/>
</dbReference>
<dbReference type="PIRSF" id="PIRSF038885">
    <property type="entry name" value="COB"/>
    <property type="match status" value="1"/>
</dbReference>
<dbReference type="SUPFAM" id="SSF81648">
    <property type="entry name" value="a domain/subunit of cytochrome bc1 complex (Ubiquinol-cytochrome c reductase)"/>
    <property type="match status" value="1"/>
</dbReference>
<dbReference type="SUPFAM" id="SSF81342">
    <property type="entry name" value="Transmembrane di-heme cytochromes"/>
    <property type="match status" value="1"/>
</dbReference>
<dbReference type="PROSITE" id="PS51003">
    <property type="entry name" value="CYTB_CTER"/>
    <property type="match status" value="1"/>
</dbReference>
<dbReference type="PROSITE" id="PS51002">
    <property type="entry name" value="CYTB_NTER"/>
    <property type="match status" value="1"/>
</dbReference>
<reference key="1">
    <citation type="journal article" date="2001" name="Mol. Phylogenet. Evol.">
        <title>Retrieval of four adaptive lineages in duiker antelope: evidence from mitochondrial DNA sequences and fluorescence in situ hybridization.</title>
        <authorList>
            <person name="van Vuuren B.J."/>
            <person name="Robinson T.J."/>
        </authorList>
    </citation>
    <scope>NUCLEOTIDE SEQUENCE [GENOMIC DNA]</scope>
</reference>
<name>CYB_CEPRF</name>
<geneLocation type="mitochondrion"/>
<evidence type="ECO:0000250" key="1"/>
<evidence type="ECO:0000250" key="2">
    <source>
        <dbReference type="UniProtKB" id="P00157"/>
    </source>
</evidence>
<evidence type="ECO:0000255" key="3">
    <source>
        <dbReference type="PROSITE-ProRule" id="PRU00967"/>
    </source>
</evidence>
<evidence type="ECO:0000255" key="4">
    <source>
        <dbReference type="PROSITE-ProRule" id="PRU00968"/>
    </source>
</evidence>
<keyword id="KW-0249">Electron transport</keyword>
<keyword id="KW-0349">Heme</keyword>
<keyword id="KW-0408">Iron</keyword>
<keyword id="KW-0472">Membrane</keyword>
<keyword id="KW-0479">Metal-binding</keyword>
<keyword id="KW-0496">Mitochondrion</keyword>
<keyword id="KW-0999">Mitochondrion inner membrane</keyword>
<keyword id="KW-0679">Respiratory chain</keyword>
<keyword id="KW-0812">Transmembrane</keyword>
<keyword id="KW-1133">Transmembrane helix</keyword>
<keyword id="KW-0813">Transport</keyword>
<keyword id="KW-0830">Ubiquinone</keyword>
<sequence length="379" mass="42763">MTNIRKTHPLLKIVNNAFIDLPAPSNISSWWNFGSLLGICLILQILTGLFLAMHYTADTTTAFSSVTHICRDVNYGWIIRYMHANGASMFFICLFMHVGRGLYYGSYTYMETWNIGVILLFATMATAFMGYVLPWGQMSFWGATVITNLLSAIPYIGTNLVEWIWGGFSVDKATLTRFFAFHFIFPFIIAALAMVHLLFLHETGSNNPTGISSDTDKIPFHPYYTIKDILGALLLVLALMTLVLFSPDLLGDPDNYPPANPLNTPPHIKPEWYFLFAYAILRSIPNKLGGVLALVLSILILVLMPFLHTSKQRSMMFRPISQCLFWILVADLLTLTWIGGQPVEHPYIIIGQLASIMYFLLILVLMPMASTIENNLLKW</sequence>
<accession>Q9B5Q5</accession>
<protein>
    <recommendedName>
        <fullName>Cytochrome b</fullName>
    </recommendedName>
    <alternativeName>
        <fullName>Complex III subunit 3</fullName>
    </alternativeName>
    <alternativeName>
        <fullName>Complex III subunit III</fullName>
    </alternativeName>
    <alternativeName>
        <fullName>Cytochrome b-c1 complex subunit 3</fullName>
    </alternativeName>
    <alternativeName>
        <fullName>Ubiquinol-cytochrome-c reductase complex cytochrome b subunit</fullName>
    </alternativeName>
</protein>
<gene>
    <name type="primary">MT-CYB</name>
    <name type="synonym">COB</name>
    <name type="synonym">CYTB</name>
    <name type="synonym">MTCYB</name>
</gene>